<keyword id="KW-0002">3D-structure</keyword>
<keyword id="KW-0963">Cytoplasm</keyword>
<keyword id="KW-0217">Developmental protein</keyword>
<keyword id="KW-0507">mRNA processing</keyword>
<keyword id="KW-0508">mRNA splicing</keyword>
<keyword id="KW-0509">mRNA transport</keyword>
<keyword id="KW-0539">Nucleus</keyword>
<keyword id="KW-1185">Reference proteome</keyword>
<keyword id="KW-0694">RNA-binding</keyword>
<keyword id="KW-0813">Transport</keyword>
<feature type="chain" id="PRO_0000081765" description="RNA-binding protein 8A">
    <location>
        <begin position="1"/>
        <end position="165"/>
    </location>
</feature>
<feature type="domain" description="RRM" evidence="1">
    <location>
        <begin position="73"/>
        <end position="151"/>
    </location>
</feature>
<feature type="region of interest" description="Disordered" evidence="2">
    <location>
        <begin position="26"/>
        <end position="47"/>
    </location>
</feature>
<feature type="sequence conflict" description="In Ref. 1; AAL29185." evidence="15" ref="1">
    <original>E</original>
    <variation>G</variation>
    <location>
        <position position="86"/>
    </location>
</feature>
<feature type="sequence conflict" description="In Ref. 4; AAL48627." evidence="15" ref="4">
    <original>N</original>
    <variation>S</variation>
    <location>
        <position position="101"/>
    </location>
</feature>
<feature type="sequence conflict" description="In Ref. 1; AAL29185." evidence="15" ref="1">
    <original>N</original>
    <variation>R</variation>
    <location>
        <position position="135"/>
    </location>
</feature>
<feature type="sequence conflict" description="In Ref. 4; AAL48627." evidence="15" ref="4">
    <original>K</original>
    <variation>R</variation>
    <location>
        <position position="159"/>
    </location>
</feature>
<feature type="sequence conflict" description="In Ref. 1; AAL29185." evidence="15" ref="1">
    <original>K</original>
    <variation>M</variation>
    <location>
        <position position="162"/>
    </location>
</feature>
<feature type="helix" evidence="20">
    <location>
        <begin position="17"/>
        <end position="28"/>
    </location>
</feature>
<feature type="strand" evidence="20">
    <location>
        <begin position="32"/>
        <end position="35"/>
    </location>
</feature>
<feature type="helix" evidence="20">
    <location>
        <begin position="36"/>
        <end position="38"/>
    </location>
</feature>
<feature type="strand" evidence="21">
    <location>
        <begin position="72"/>
        <end position="79"/>
    </location>
</feature>
<feature type="helix" evidence="21">
    <location>
        <begin position="86"/>
        <end position="93"/>
    </location>
</feature>
<feature type="helix" evidence="21">
    <location>
        <begin position="94"/>
        <end position="96"/>
    </location>
</feature>
<feature type="strand" evidence="21">
    <location>
        <begin position="99"/>
        <end position="103"/>
    </location>
</feature>
<feature type="turn" evidence="21">
    <location>
        <begin position="108"/>
        <end position="110"/>
    </location>
</feature>
<feature type="strand" evidence="21">
    <location>
        <begin position="111"/>
        <end position="113"/>
    </location>
</feature>
<feature type="strand" evidence="21">
    <location>
        <begin position="115"/>
        <end position="123"/>
    </location>
</feature>
<feature type="helix" evidence="21">
    <location>
        <begin position="124"/>
        <end position="134"/>
    </location>
</feature>
<feature type="strand" evidence="21">
    <location>
        <begin position="145"/>
        <end position="153"/>
    </location>
</feature>
<name>RBM8A_DROME</name>
<proteinExistence type="evidence at protein level"/>
<reference evidence="15 17" key="1">
    <citation type="journal article" date="2001" name="Genes Dev.">
        <title>The RNA-binding protein Tsunagi interacts with Mago Nashi to establish polarity and localize oskar mRNA during Drosophila oogenesis.</title>
        <authorList>
            <person name="Mohr S.E."/>
            <person name="Dillon S.T."/>
            <person name="Boswell R.E."/>
        </authorList>
    </citation>
    <scope>NUCLEOTIDE SEQUENCE [MRNA]</scope>
    <scope>FUNCTION</scope>
    <scope>INTERACTION WITH MAGO</scope>
    <scope>DEVELOPMENTAL STAGE</scope>
</reference>
<reference evidence="16" key="2">
    <citation type="journal article" date="2000" name="Science">
        <title>The genome sequence of Drosophila melanogaster.</title>
        <authorList>
            <person name="Adams M.D."/>
            <person name="Celniker S.E."/>
            <person name="Holt R.A."/>
            <person name="Evans C.A."/>
            <person name="Gocayne J.D."/>
            <person name="Amanatides P.G."/>
            <person name="Scherer S.E."/>
            <person name="Li P.W."/>
            <person name="Hoskins R.A."/>
            <person name="Galle R.F."/>
            <person name="George R.A."/>
            <person name="Lewis S.E."/>
            <person name="Richards S."/>
            <person name="Ashburner M."/>
            <person name="Henderson S.N."/>
            <person name="Sutton G.G."/>
            <person name="Wortman J.R."/>
            <person name="Yandell M.D."/>
            <person name="Zhang Q."/>
            <person name="Chen L.X."/>
            <person name="Brandon R.C."/>
            <person name="Rogers Y.-H.C."/>
            <person name="Blazej R.G."/>
            <person name="Champe M."/>
            <person name="Pfeiffer B.D."/>
            <person name="Wan K.H."/>
            <person name="Doyle C."/>
            <person name="Baxter E.G."/>
            <person name="Helt G."/>
            <person name="Nelson C.R."/>
            <person name="Miklos G.L.G."/>
            <person name="Abril J.F."/>
            <person name="Agbayani A."/>
            <person name="An H.-J."/>
            <person name="Andrews-Pfannkoch C."/>
            <person name="Baldwin D."/>
            <person name="Ballew R.M."/>
            <person name="Basu A."/>
            <person name="Baxendale J."/>
            <person name="Bayraktaroglu L."/>
            <person name="Beasley E.M."/>
            <person name="Beeson K.Y."/>
            <person name="Benos P.V."/>
            <person name="Berman B.P."/>
            <person name="Bhandari D."/>
            <person name="Bolshakov S."/>
            <person name="Borkova D."/>
            <person name="Botchan M.R."/>
            <person name="Bouck J."/>
            <person name="Brokstein P."/>
            <person name="Brottier P."/>
            <person name="Burtis K.C."/>
            <person name="Busam D.A."/>
            <person name="Butler H."/>
            <person name="Cadieu E."/>
            <person name="Center A."/>
            <person name="Chandra I."/>
            <person name="Cherry J.M."/>
            <person name="Cawley S."/>
            <person name="Dahlke C."/>
            <person name="Davenport L.B."/>
            <person name="Davies P."/>
            <person name="de Pablos B."/>
            <person name="Delcher A."/>
            <person name="Deng Z."/>
            <person name="Mays A.D."/>
            <person name="Dew I."/>
            <person name="Dietz S.M."/>
            <person name="Dodson K."/>
            <person name="Doup L.E."/>
            <person name="Downes M."/>
            <person name="Dugan-Rocha S."/>
            <person name="Dunkov B.C."/>
            <person name="Dunn P."/>
            <person name="Durbin K.J."/>
            <person name="Evangelista C.C."/>
            <person name="Ferraz C."/>
            <person name="Ferriera S."/>
            <person name="Fleischmann W."/>
            <person name="Fosler C."/>
            <person name="Gabrielian A.E."/>
            <person name="Garg N.S."/>
            <person name="Gelbart W.M."/>
            <person name="Glasser K."/>
            <person name="Glodek A."/>
            <person name="Gong F."/>
            <person name="Gorrell J.H."/>
            <person name="Gu Z."/>
            <person name="Guan P."/>
            <person name="Harris M."/>
            <person name="Harris N.L."/>
            <person name="Harvey D.A."/>
            <person name="Heiman T.J."/>
            <person name="Hernandez J.R."/>
            <person name="Houck J."/>
            <person name="Hostin D."/>
            <person name="Houston K.A."/>
            <person name="Howland T.J."/>
            <person name="Wei M.-H."/>
            <person name="Ibegwam C."/>
            <person name="Jalali M."/>
            <person name="Kalush F."/>
            <person name="Karpen G.H."/>
            <person name="Ke Z."/>
            <person name="Kennison J.A."/>
            <person name="Ketchum K.A."/>
            <person name="Kimmel B.E."/>
            <person name="Kodira C.D."/>
            <person name="Kraft C.L."/>
            <person name="Kravitz S."/>
            <person name="Kulp D."/>
            <person name="Lai Z."/>
            <person name="Lasko P."/>
            <person name="Lei Y."/>
            <person name="Levitsky A.A."/>
            <person name="Li J.H."/>
            <person name="Li Z."/>
            <person name="Liang Y."/>
            <person name="Lin X."/>
            <person name="Liu X."/>
            <person name="Mattei B."/>
            <person name="McIntosh T.C."/>
            <person name="McLeod M.P."/>
            <person name="McPherson D."/>
            <person name="Merkulov G."/>
            <person name="Milshina N.V."/>
            <person name="Mobarry C."/>
            <person name="Morris J."/>
            <person name="Moshrefi A."/>
            <person name="Mount S.M."/>
            <person name="Moy M."/>
            <person name="Murphy B."/>
            <person name="Murphy L."/>
            <person name="Muzny D.M."/>
            <person name="Nelson D.L."/>
            <person name="Nelson D.R."/>
            <person name="Nelson K.A."/>
            <person name="Nixon K."/>
            <person name="Nusskern D.R."/>
            <person name="Pacleb J.M."/>
            <person name="Palazzolo M."/>
            <person name="Pittman G.S."/>
            <person name="Pan S."/>
            <person name="Pollard J."/>
            <person name="Puri V."/>
            <person name="Reese M.G."/>
            <person name="Reinert K."/>
            <person name="Remington K."/>
            <person name="Saunders R.D.C."/>
            <person name="Scheeler F."/>
            <person name="Shen H."/>
            <person name="Shue B.C."/>
            <person name="Siden-Kiamos I."/>
            <person name="Simpson M."/>
            <person name="Skupski M.P."/>
            <person name="Smith T.J."/>
            <person name="Spier E."/>
            <person name="Spradling A.C."/>
            <person name="Stapleton M."/>
            <person name="Strong R."/>
            <person name="Sun E."/>
            <person name="Svirskas R."/>
            <person name="Tector C."/>
            <person name="Turner R."/>
            <person name="Venter E."/>
            <person name="Wang A.H."/>
            <person name="Wang X."/>
            <person name="Wang Z.-Y."/>
            <person name="Wassarman D.A."/>
            <person name="Weinstock G.M."/>
            <person name="Weissenbach J."/>
            <person name="Williams S.M."/>
            <person name="Woodage T."/>
            <person name="Worley K.C."/>
            <person name="Wu D."/>
            <person name="Yang S."/>
            <person name="Yao Q.A."/>
            <person name="Ye J."/>
            <person name="Yeh R.-F."/>
            <person name="Zaveri J.S."/>
            <person name="Zhan M."/>
            <person name="Zhang G."/>
            <person name="Zhao Q."/>
            <person name="Zheng L."/>
            <person name="Zheng X.H."/>
            <person name="Zhong F.N."/>
            <person name="Zhong W."/>
            <person name="Zhou X."/>
            <person name="Zhu S.C."/>
            <person name="Zhu X."/>
            <person name="Smith H.O."/>
            <person name="Gibbs R.A."/>
            <person name="Myers E.W."/>
            <person name="Rubin G.M."/>
            <person name="Venter J.C."/>
        </authorList>
    </citation>
    <scope>NUCLEOTIDE SEQUENCE [LARGE SCALE GENOMIC DNA]</scope>
    <source>
        <strain evidence="3">Berkeley</strain>
    </source>
</reference>
<reference evidence="15 16" key="3">
    <citation type="journal article" date="2002" name="Genome Biol.">
        <title>Annotation of the Drosophila melanogaster euchromatic genome: a systematic review.</title>
        <authorList>
            <person name="Misra S."/>
            <person name="Crosby M.A."/>
            <person name="Mungall C.J."/>
            <person name="Matthews B.B."/>
            <person name="Campbell K.S."/>
            <person name="Hradecky P."/>
            <person name="Huang Y."/>
            <person name="Kaminker J.S."/>
            <person name="Millburn G.H."/>
            <person name="Prochnik S.E."/>
            <person name="Smith C.D."/>
            <person name="Tupy J.L."/>
            <person name="Whitfield E.J."/>
            <person name="Bayraktaroglu L."/>
            <person name="Berman B.P."/>
            <person name="Bettencourt B.R."/>
            <person name="Celniker S.E."/>
            <person name="de Grey A.D.N.J."/>
            <person name="Drysdale R.A."/>
            <person name="Harris N.L."/>
            <person name="Richter J."/>
            <person name="Russo S."/>
            <person name="Schroeder A.J."/>
            <person name="Shu S.Q."/>
            <person name="Stapleton M."/>
            <person name="Yamada C."/>
            <person name="Ashburner M."/>
            <person name="Gelbart W.M."/>
            <person name="Rubin G.M."/>
            <person name="Lewis S.E."/>
        </authorList>
    </citation>
    <scope>GENOME REANNOTATION</scope>
    <source>
        <strain>Berkeley</strain>
    </source>
</reference>
<reference evidence="18" key="4">
    <citation type="journal article" date="2002" name="Genome Biol.">
        <title>A Drosophila full-length cDNA resource.</title>
        <authorList>
            <person name="Stapleton M."/>
            <person name="Carlson J.W."/>
            <person name="Brokstein P."/>
            <person name="Yu C."/>
            <person name="Champe M."/>
            <person name="George R.A."/>
            <person name="Guarin H."/>
            <person name="Kronmiller B."/>
            <person name="Pacleb J.M."/>
            <person name="Park S."/>
            <person name="Wan K.H."/>
            <person name="Rubin G.M."/>
            <person name="Celniker S.E."/>
        </authorList>
    </citation>
    <scope>NUCLEOTIDE SEQUENCE [LARGE SCALE MRNA]</scope>
    <source>
        <strain evidence="18">Berkeley</strain>
        <tissue evidence="5">Embryo</tissue>
    </source>
</reference>
<reference key="5">
    <citation type="journal article" date="2004" name="Nature">
        <title>An eIF4AIII-containing complex required for mRNA localization and nonsense-mediated mRNA decay.</title>
        <authorList>
            <person name="Palacios I.M."/>
            <person name="Gatfield D."/>
            <person name="St Johnston D."/>
            <person name="Izaurralde E."/>
        </authorList>
    </citation>
    <scope>FUNCTION</scope>
    <scope>IDENTIFICATION IN THE EJC COMPLEX</scope>
    <scope>INTERACTION WITH EIF4AIII</scope>
</reference>
<reference key="6">
    <citation type="journal article" date="2010" name="Cell">
        <title>Exon junction complex subunits are required to splice Drosophila MAP kinase, a large heterochromatic gene.</title>
        <authorList>
            <person name="Roignant J.Y."/>
            <person name="Treisman J.E."/>
        </authorList>
    </citation>
    <scope>FUNCTION</scope>
    <scope>DISRUPTION PHENOTYPE</scope>
</reference>
<reference key="7">
    <citation type="journal article" date="2010" name="Cell">
        <title>The exon junction complex controls the splicing of MAPK and other long intron-containing transcripts in Drosophila.</title>
        <authorList>
            <person name="Ashton-Beaucage D."/>
            <person name="Udell C.M."/>
            <person name="Lavoie H."/>
            <person name="Baril C."/>
            <person name="Lefrancois M."/>
            <person name="Chagnon P."/>
            <person name="Gendron P."/>
            <person name="Caron-Lizotte O."/>
            <person name="Bonneil E."/>
            <person name="Thibault P."/>
            <person name="Therrien M."/>
        </authorList>
    </citation>
    <scope>FUNCTION</scope>
    <scope>DISRUPTION PHENOTYPE</scope>
</reference>
<reference key="8">
    <citation type="journal article" date="2014" name="PLoS Genet.">
        <title>The EJC binding and dissociating activity of PYM is regulated in Drosophila.</title>
        <authorList>
            <person name="Ghosh S."/>
            <person name="Obrdlik A."/>
            <person name="Marchand V."/>
            <person name="Ephrussi A."/>
        </authorList>
    </citation>
    <scope>FUNCTION</scope>
    <scope>INTERACTION WITH PYM</scope>
</reference>
<reference key="9">
    <citation type="journal article" date="2003" name="Nat. Struct. Biol.">
        <title>A novel mode of RBD-protein recognition in the Y14-Mago complex.</title>
        <authorList>
            <person name="Fribourg S."/>
            <person name="Gatfield D."/>
            <person name="Izaurralde E."/>
            <person name="Conti E."/>
        </authorList>
    </citation>
    <scope>X-RAY CRYSTALLOGRAPHY (2.5 ANGSTROMS) IN COMPLEX WITH MAGO</scope>
    <scope>FUNCTION</scope>
    <scope>SUBCELLULAR LOCATION</scope>
</reference>
<reference key="10">
    <citation type="journal article" date="2003" name="Genes Dev.">
        <title>Crystal structure of the Drosophila Mago nashi-Y14 complex.</title>
        <authorList>
            <person name="Shi H."/>
            <person name="Xu R.-M."/>
        </authorList>
    </citation>
    <scope>X-RAY CRYSTALLOGRAPHY (1.85 ANGSTROMS) OF 47-156 IN COMPLEX WITH MAGO</scope>
</reference>
<reference key="11">
    <citation type="journal article" date="2004" name="EMBO Rep.">
        <title>Molecular insights into the interaction of PYM with the Mago-Y14 core of the exon junction complex.</title>
        <authorList>
            <person name="Bono F."/>
            <person name="Ebert J."/>
            <person name="Unterholzner L."/>
            <person name="Guettler T."/>
            <person name="Izaurralde E."/>
            <person name="Conti E."/>
        </authorList>
    </citation>
    <scope>X-RAY CRYSTALLOGRAPHY (1.9 ANGSTROMS) IN COMPLEX WITH MAGO AND PYM</scope>
</reference>
<sequence>MADVLDIDNAEEFEVDEDGDQGIVRLKEKAKHRKGRGFGSDSNTREAIHSYERVRNEDDDELEPGPQRSVEGWILFVTSIHEEAQEDEIQEKFCDYGEIKNIHLNLDRRTGFSKGYALVEYETHKQALAAKEALNGAEIMGQTIQVDWCFVKGPKRVKKSEKRRR</sequence>
<dbReference type="EMBL" id="AF173550">
    <property type="protein sequence ID" value="AAL29185.1"/>
    <property type="molecule type" value="mRNA"/>
</dbReference>
<dbReference type="EMBL" id="AE013599">
    <property type="protein sequence ID" value="AAF58987.1"/>
    <property type="molecule type" value="Genomic_DNA"/>
</dbReference>
<dbReference type="EMBL" id="AY071005">
    <property type="protein sequence ID" value="AAL48627.1"/>
    <property type="molecule type" value="mRNA"/>
</dbReference>
<dbReference type="RefSeq" id="NP_610454.2">
    <property type="nucleotide sequence ID" value="NM_136610.4"/>
</dbReference>
<dbReference type="PDB" id="1HL6">
    <property type="method" value="X-ray"/>
    <property type="resolution" value="2.50 A"/>
    <property type="chains" value="A/C=1-165"/>
</dbReference>
<dbReference type="PDB" id="1OO0">
    <property type="method" value="X-ray"/>
    <property type="resolution" value="1.85 A"/>
    <property type="chains" value="B=47-156"/>
</dbReference>
<dbReference type="PDB" id="1RK8">
    <property type="method" value="X-ray"/>
    <property type="resolution" value="1.90 A"/>
    <property type="chains" value="A=1-165"/>
</dbReference>
<dbReference type="PDB" id="2X1G">
    <property type="method" value="X-ray"/>
    <property type="resolution" value="3.35 A"/>
    <property type="chains" value="A/C=1-165"/>
</dbReference>
<dbReference type="PDBsum" id="1HL6"/>
<dbReference type="PDBsum" id="1OO0"/>
<dbReference type="PDBsum" id="1RK8"/>
<dbReference type="PDBsum" id="2X1G"/>
<dbReference type="SMR" id="Q9V535"/>
<dbReference type="BioGRID" id="61762">
    <property type="interactions" value="13"/>
</dbReference>
<dbReference type="ComplexPortal" id="CPX-3100">
    <property type="entry name" value="mago-y14 exon-exon junction subcomplex"/>
</dbReference>
<dbReference type="ComplexPortal" id="CPX-3147">
    <property type="entry name" value="PYM-mago-Y14 complex"/>
</dbReference>
<dbReference type="ComplexPortal" id="CPX-3171">
    <property type="entry name" value="cdm-mago-Y14 complex"/>
</dbReference>
<dbReference type="DIP" id="DIP-24075N"/>
<dbReference type="FunCoup" id="Q9V535">
    <property type="interactions" value="2478"/>
</dbReference>
<dbReference type="IntAct" id="Q9V535">
    <property type="interactions" value="5"/>
</dbReference>
<dbReference type="STRING" id="7227.FBpp0087648"/>
<dbReference type="PaxDb" id="7227-FBpp0087648"/>
<dbReference type="ABCD" id="Q9V535">
    <property type="antibodies" value="4 sequenced antibodies"/>
</dbReference>
<dbReference type="EnsemblMetazoa" id="FBtr0088567">
    <property type="protein sequence ID" value="FBpp0087648"/>
    <property type="gene ID" value="FBgn0033378"/>
</dbReference>
<dbReference type="GeneID" id="35924"/>
<dbReference type="KEGG" id="dme:Dmel_CG8781"/>
<dbReference type="UCSC" id="CG8781-RA">
    <property type="organism name" value="d. melanogaster"/>
</dbReference>
<dbReference type="AGR" id="FB:FBgn0033378"/>
<dbReference type="CTD" id="110124"/>
<dbReference type="FlyBase" id="FBgn0033378">
    <property type="gene designation" value="tsu"/>
</dbReference>
<dbReference type="VEuPathDB" id="VectorBase:FBgn0033378"/>
<dbReference type="eggNOG" id="KOG0130">
    <property type="taxonomic scope" value="Eukaryota"/>
</dbReference>
<dbReference type="GeneTree" id="ENSGT00730000111185"/>
<dbReference type="HOGENOM" id="CLU_012062_18_3_1"/>
<dbReference type="InParanoid" id="Q9V535"/>
<dbReference type="OMA" id="IYNHEEF"/>
<dbReference type="OrthoDB" id="15688at2759"/>
<dbReference type="PhylomeDB" id="Q9V535"/>
<dbReference type="Reactome" id="R-DME-159236">
    <property type="pathway name" value="Transport of Mature mRNA derived from an Intron-Containing Transcript"/>
</dbReference>
<dbReference type="Reactome" id="R-DME-72163">
    <property type="pathway name" value="mRNA Splicing - Major Pathway"/>
</dbReference>
<dbReference type="Reactome" id="R-DME-72187">
    <property type="pathway name" value="mRNA 3'-end processing"/>
</dbReference>
<dbReference type="Reactome" id="R-DME-73856">
    <property type="pathway name" value="RNA Polymerase II Transcription Termination"/>
</dbReference>
<dbReference type="Reactome" id="R-DME-975957">
    <property type="pathway name" value="Nonsense Mediated Decay (NMD) enhanced by the Exon Junction Complex (EJC)"/>
</dbReference>
<dbReference type="SignaLink" id="Q9V535"/>
<dbReference type="BioGRID-ORCS" id="35924">
    <property type="hits" value="1 hit in 1 CRISPR screen"/>
</dbReference>
<dbReference type="EvolutionaryTrace" id="Q9V535"/>
<dbReference type="GenomeRNAi" id="35924"/>
<dbReference type="PRO" id="PR:Q9V535"/>
<dbReference type="Proteomes" id="UP000000803">
    <property type="component" value="Chromosome 2R"/>
</dbReference>
<dbReference type="Bgee" id="FBgn0033378">
    <property type="expression patterns" value="Expressed in eye disc (Drosophila) and 150 other cell types or tissues"/>
</dbReference>
<dbReference type="ExpressionAtlas" id="Q9V535">
    <property type="expression patterns" value="baseline and differential"/>
</dbReference>
<dbReference type="GO" id="GO:0071013">
    <property type="term" value="C:catalytic step 2 spliceosome"/>
    <property type="evidence" value="ECO:0007005"/>
    <property type="project" value="FlyBase"/>
</dbReference>
<dbReference type="GO" id="GO:0005737">
    <property type="term" value="C:cytoplasm"/>
    <property type="evidence" value="ECO:0000314"/>
    <property type="project" value="FlyBase"/>
</dbReference>
<dbReference type="GO" id="GO:0035145">
    <property type="term" value="C:exon-exon junction complex"/>
    <property type="evidence" value="ECO:0000353"/>
    <property type="project" value="FlyBase"/>
</dbReference>
<dbReference type="GO" id="GO:0042564">
    <property type="term" value="C:NLS-dependent protein nuclear import complex"/>
    <property type="evidence" value="ECO:0000353"/>
    <property type="project" value="ComplexPortal"/>
</dbReference>
<dbReference type="GO" id="GO:0005634">
    <property type="term" value="C:nucleus"/>
    <property type="evidence" value="ECO:0000314"/>
    <property type="project" value="FlyBase"/>
</dbReference>
<dbReference type="GO" id="GO:0003729">
    <property type="term" value="F:mRNA binding"/>
    <property type="evidence" value="ECO:0000250"/>
    <property type="project" value="FlyBase"/>
</dbReference>
<dbReference type="GO" id="GO:0046595">
    <property type="term" value="P:establishment of pole plasm mRNA localization"/>
    <property type="evidence" value="ECO:0000304"/>
    <property type="project" value="FlyBase"/>
</dbReference>
<dbReference type="GO" id="GO:0007294">
    <property type="term" value="P:germarium-derived oocyte fate determination"/>
    <property type="evidence" value="ECO:0000315"/>
    <property type="project" value="FlyBase"/>
</dbReference>
<dbReference type="GO" id="GO:0051170">
    <property type="term" value="P:import into nucleus"/>
    <property type="evidence" value="ECO:0000303"/>
    <property type="project" value="ComplexPortal"/>
</dbReference>
<dbReference type="GO" id="GO:0000226">
    <property type="term" value="P:microtubule cytoskeleton organization"/>
    <property type="evidence" value="ECO:0000315"/>
    <property type="project" value="FlyBase"/>
</dbReference>
<dbReference type="GO" id="GO:0000398">
    <property type="term" value="P:mRNA splicing, via spliceosome"/>
    <property type="evidence" value="ECO:0000305"/>
    <property type="project" value="FlyBase"/>
</dbReference>
<dbReference type="GO" id="GO:0051028">
    <property type="term" value="P:mRNA transport"/>
    <property type="evidence" value="ECO:0007669"/>
    <property type="project" value="UniProtKB-KW"/>
</dbReference>
<dbReference type="GO" id="GO:0007314">
    <property type="term" value="P:oocyte anterior/posterior axis specification"/>
    <property type="evidence" value="ECO:0000315"/>
    <property type="project" value="FlyBase"/>
</dbReference>
<dbReference type="GO" id="GO:0007310">
    <property type="term" value="P:oocyte dorsal/ventral axis specification"/>
    <property type="evidence" value="ECO:0000315"/>
    <property type="project" value="FlyBase"/>
</dbReference>
<dbReference type="GO" id="GO:0051663">
    <property type="term" value="P:oocyte nucleus localization involved in oocyte dorsal/ventral axis specification"/>
    <property type="evidence" value="ECO:0000315"/>
    <property type="project" value="FlyBase"/>
</dbReference>
<dbReference type="GO" id="GO:0045451">
    <property type="term" value="P:pole plasm oskar mRNA localization"/>
    <property type="evidence" value="ECO:0000304"/>
    <property type="project" value="FlyBase"/>
</dbReference>
<dbReference type="GO" id="GO:0007317">
    <property type="term" value="P:regulation of pole plasm oskar mRNA localization"/>
    <property type="evidence" value="ECO:0000315"/>
    <property type="project" value="FlyBase"/>
</dbReference>
<dbReference type="GO" id="GO:0008380">
    <property type="term" value="P:RNA splicing"/>
    <property type="evidence" value="ECO:0000315"/>
    <property type="project" value="FlyBase"/>
</dbReference>
<dbReference type="CDD" id="cd12324">
    <property type="entry name" value="RRM_RBM8"/>
    <property type="match status" value="1"/>
</dbReference>
<dbReference type="FunFam" id="3.30.70.330:FF:000157">
    <property type="entry name" value="RNA-binding protein 8A"/>
    <property type="match status" value="1"/>
</dbReference>
<dbReference type="Gene3D" id="3.30.70.330">
    <property type="match status" value="1"/>
</dbReference>
<dbReference type="InterPro" id="IPR012677">
    <property type="entry name" value="Nucleotide-bd_a/b_plait_sf"/>
</dbReference>
<dbReference type="InterPro" id="IPR035979">
    <property type="entry name" value="RBD_domain_sf"/>
</dbReference>
<dbReference type="InterPro" id="IPR008111">
    <property type="entry name" value="RNA-bd_8"/>
</dbReference>
<dbReference type="InterPro" id="IPR000504">
    <property type="entry name" value="RRM_dom"/>
</dbReference>
<dbReference type="InterPro" id="IPR033744">
    <property type="entry name" value="RRM_RBM8"/>
</dbReference>
<dbReference type="PANTHER" id="PTHR45894">
    <property type="entry name" value="RNA-BINDING PROTEIN 8A"/>
    <property type="match status" value="1"/>
</dbReference>
<dbReference type="Pfam" id="PF00076">
    <property type="entry name" value="RRM_1"/>
    <property type="match status" value="1"/>
</dbReference>
<dbReference type="PRINTS" id="PR01738">
    <property type="entry name" value="RNABINDINGM8"/>
</dbReference>
<dbReference type="SMART" id="SM00360">
    <property type="entry name" value="RRM"/>
    <property type="match status" value="1"/>
</dbReference>
<dbReference type="SUPFAM" id="SSF54928">
    <property type="entry name" value="RNA-binding domain, RBD"/>
    <property type="match status" value="1"/>
</dbReference>
<dbReference type="PROSITE" id="PS50102">
    <property type="entry name" value="RRM"/>
    <property type="match status" value="1"/>
</dbReference>
<protein>
    <recommendedName>
        <fullName>RNA-binding protein 8A</fullName>
    </recommendedName>
    <alternativeName>
        <fullName>Protein tsunagi</fullName>
    </alternativeName>
</protein>
<evidence type="ECO:0000255" key="1">
    <source>
        <dbReference type="PROSITE-ProRule" id="PRU00176"/>
    </source>
</evidence>
<evidence type="ECO:0000256" key="2">
    <source>
        <dbReference type="SAM" id="MobiDB-lite"/>
    </source>
</evidence>
<evidence type="ECO:0000269" key="3">
    <source>
    </source>
</evidence>
<evidence type="ECO:0000269" key="4">
    <source>
    </source>
</evidence>
<evidence type="ECO:0000269" key="5">
    <source>
    </source>
</evidence>
<evidence type="ECO:0000269" key="6">
    <source>
    </source>
</evidence>
<evidence type="ECO:0000269" key="7">
    <source>
    </source>
</evidence>
<evidence type="ECO:0000269" key="8">
    <source>
    </source>
</evidence>
<evidence type="ECO:0000269" key="9">
    <source>
    </source>
</evidence>
<evidence type="ECO:0000269" key="10">
    <source>
    </source>
</evidence>
<evidence type="ECO:0000269" key="11">
    <source>
    </source>
</evidence>
<evidence type="ECO:0000269" key="12">
    <source>
    </source>
</evidence>
<evidence type="ECO:0000303" key="13">
    <source>
    </source>
</evidence>
<evidence type="ECO:0000303" key="14">
    <source>
    </source>
</evidence>
<evidence type="ECO:0000305" key="15"/>
<evidence type="ECO:0000312" key="16">
    <source>
        <dbReference type="EMBL" id="AAF58987.1"/>
    </source>
</evidence>
<evidence type="ECO:0000312" key="17">
    <source>
        <dbReference type="EMBL" id="AAL29185.1"/>
    </source>
</evidence>
<evidence type="ECO:0000312" key="18">
    <source>
        <dbReference type="EMBL" id="AAL48627.1"/>
    </source>
</evidence>
<evidence type="ECO:0000312" key="19">
    <source>
        <dbReference type="FlyBase" id="FBgn0033378"/>
    </source>
</evidence>
<evidence type="ECO:0007829" key="20">
    <source>
        <dbReference type="PDB" id="1HL6"/>
    </source>
</evidence>
<evidence type="ECO:0007829" key="21">
    <source>
        <dbReference type="PDB" id="1OO0"/>
    </source>
</evidence>
<gene>
    <name evidence="19" type="primary">tsu</name>
    <name evidence="14" type="synonym">Y14</name>
    <name evidence="19" type="ORF">CG8781</name>
</gene>
<accession>Q9V535</accession>
<accession>Q8SZA6</accession>
<accession>Q95X08</accession>
<comment type="function">
    <text evidence="4 7 10 11 12">Core component of the splicing-dependent multiprotein exon junction complex (EJC) deposited at splice junctions on mRNAs (PubMed:14973490, PubMed:24967911). Involved in exon definition of genes containing long introns, including the rolled/MAPK gene (PubMed:20946982, PubMed:20946983). The mago-tsu heterodimer interacts with the EJC key regulator Pym leading to EJC disassembly in the cytoplasm (PubMed:24967911). Has a role in oskar mRNA localization to the posterior pole of the developing oocyte (PubMed:11691839).</text>
</comment>
<comment type="subunit">
    <text evidence="4 6 7 8 9 12">Heterodimer (via RRM domain) with mago (PubMed:11691839, PubMed:12704080, PubMed:12730685). Part of the mRNA splicing-dependent exon junction complex (EJC) complex; the core complex contains btz/CASC3, eIF4AIII, mago and tsu/RBM8A (PubMed:14973490). Interacts with Pym (via N-terminus); the interaction is direct (PubMed:14968132, PubMed:24967911). Interacts with eIF4AIII (PubMed:14973490).</text>
</comment>
<comment type="interaction">
    <interactant intactId="EBI-172458">
        <id>Q9V535</id>
    </interactant>
    <interactant intactId="EBI-159609">
        <id>P49028</id>
        <label>mago</label>
    </interactant>
    <organismsDiffer>false</organismsDiffer>
    <experiments>7</experiments>
</comment>
<comment type="subcellular location">
    <subcellularLocation>
        <location evidence="7">Nucleus</location>
    </subcellularLocation>
    <subcellularLocation>
        <location evidence="7">Cytoplasm</location>
    </subcellularLocation>
    <text>Part of the EJC assembled on mRNAs in the nucleus and remains part of the complex when mRNA moves into the cytoplasm.</text>
</comment>
<comment type="developmental stage">
    <text evidence="4">Expressed throughout development. Localizes to the posterior pole of the oocyte during stages 1-9 of oogenesis.</text>
</comment>
<comment type="domain">
    <text evidence="7">The RNA recognition motif (RRM) is involved in the interaction with mago. The RNA-binding activity of such domains is therefore uncertain.</text>
</comment>
<comment type="disruption phenotype">
    <text evidence="10 11">Developing photoreceptor cell clusters express reduced levels of rolled/MAPK and fail to differentiate normally.</text>
</comment>
<comment type="miscellaneous">
    <text evidence="13">'Tsunagi' means 'connection' or 'link' in Japanese.</text>
</comment>
<comment type="similarity">
    <text evidence="15">Belongs to the RBM8A family.</text>
</comment>
<organism>
    <name type="scientific">Drosophila melanogaster</name>
    <name type="common">Fruit fly</name>
    <dbReference type="NCBI Taxonomy" id="7227"/>
    <lineage>
        <taxon>Eukaryota</taxon>
        <taxon>Metazoa</taxon>
        <taxon>Ecdysozoa</taxon>
        <taxon>Arthropoda</taxon>
        <taxon>Hexapoda</taxon>
        <taxon>Insecta</taxon>
        <taxon>Pterygota</taxon>
        <taxon>Neoptera</taxon>
        <taxon>Endopterygota</taxon>
        <taxon>Diptera</taxon>
        <taxon>Brachycera</taxon>
        <taxon>Muscomorpha</taxon>
        <taxon>Ephydroidea</taxon>
        <taxon>Drosophilidae</taxon>
        <taxon>Drosophila</taxon>
        <taxon>Sophophora</taxon>
    </lineage>
</organism>